<gene>
    <name type="primary">creb3l3b</name>
    <name type="synonym">creb3l3</name>
    <name type="ORF">si:dkey-110c1.2</name>
</gene>
<name>CR3LB_DANRE</name>
<accession>Q1LYG4</accession>
<organism>
    <name type="scientific">Danio rerio</name>
    <name type="common">Zebrafish</name>
    <name type="synonym">Brachydanio rerio</name>
    <dbReference type="NCBI Taxonomy" id="7955"/>
    <lineage>
        <taxon>Eukaryota</taxon>
        <taxon>Metazoa</taxon>
        <taxon>Chordata</taxon>
        <taxon>Craniata</taxon>
        <taxon>Vertebrata</taxon>
        <taxon>Euteleostomi</taxon>
        <taxon>Actinopterygii</taxon>
        <taxon>Neopterygii</taxon>
        <taxon>Teleostei</taxon>
        <taxon>Ostariophysi</taxon>
        <taxon>Cypriniformes</taxon>
        <taxon>Danionidae</taxon>
        <taxon>Danioninae</taxon>
        <taxon>Danio</taxon>
    </lineage>
</organism>
<sequence length="428" mass="48332">MDHYSDQGGDGIELLDLLFDKNDGILRYENMGQQNNQLWPVQDPHMMMTPQGNEDFFNALIGGSDSVSGSPVWSPSPSDSGISEDPHSDHIDSPPPNASPPMEPHIVVSQTQHSLNINFPFDFNGWETGFLPDQSGGTQCASETPQAQQTTGFPLTVKDLLLSGTPEPAAKVSQQSYQELILTEDEKRLLAKEGMTLPNQFPLTKYEERILKKIRRKIRNKQSAQESRKKKKEYIDGLESRMAACSAHNHELQRKVFQLEKCNISLMEQLRRLQALVMNGSNKPVQAGTCVLVLLLSFTLILLPNLKPFTDTKVSQHGDFSPMRVQSRSLHNLQSSRVLRNLDHPYSMTENAKILPRFPEDKTMEEIASLLGRLHRRPQFTEYDPESHNHSFDQHDEHHHGDPITGHVATVTLNPRRGSRRSPHADDM</sequence>
<dbReference type="EMBL" id="BX005203">
    <property type="protein sequence ID" value="CAK05095.1"/>
    <property type="status" value="ALT_INIT"/>
    <property type="molecule type" value="Genomic_DNA"/>
</dbReference>
<dbReference type="SMR" id="Q1LYG4"/>
<dbReference type="FunCoup" id="Q1LYG4">
    <property type="interactions" value="234"/>
</dbReference>
<dbReference type="STRING" id="7955.ENSDARP00000113661"/>
<dbReference type="GlyCosmos" id="Q1LYG4">
    <property type="glycosylation" value="1 site, No reported glycans"/>
</dbReference>
<dbReference type="PaxDb" id="7955-ENSDARP00000113661"/>
<dbReference type="AGR" id="ZFIN:ZDB-GENE-030131-4298"/>
<dbReference type="ZFIN" id="ZDB-GENE-030131-4298">
    <property type="gene designation" value="creb3l3a"/>
</dbReference>
<dbReference type="eggNOG" id="KOG0709">
    <property type="taxonomic scope" value="Eukaryota"/>
</dbReference>
<dbReference type="InParanoid" id="Q1LYG4"/>
<dbReference type="PhylomeDB" id="Q1LYG4"/>
<dbReference type="Reactome" id="R-DRE-8874211">
    <property type="pathway name" value="CREB3 factors activate genes"/>
</dbReference>
<dbReference type="Proteomes" id="UP000000437">
    <property type="component" value="Unplaced"/>
</dbReference>
<dbReference type="GO" id="GO:0005789">
    <property type="term" value="C:endoplasmic reticulum membrane"/>
    <property type="evidence" value="ECO:0007669"/>
    <property type="project" value="UniProtKB-SubCell"/>
</dbReference>
<dbReference type="GO" id="GO:0005634">
    <property type="term" value="C:nucleus"/>
    <property type="evidence" value="ECO:0000318"/>
    <property type="project" value="GO_Central"/>
</dbReference>
<dbReference type="GO" id="GO:0000981">
    <property type="term" value="F:DNA-binding transcription factor activity, RNA polymerase II-specific"/>
    <property type="evidence" value="ECO:0000318"/>
    <property type="project" value="GO_Central"/>
</dbReference>
<dbReference type="GO" id="GO:0000978">
    <property type="term" value="F:RNA polymerase II cis-regulatory region sequence-specific DNA binding"/>
    <property type="evidence" value="ECO:0000318"/>
    <property type="project" value="GO_Central"/>
</dbReference>
<dbReference type="GO" id="GO:0006357">
    <property type="term" value="P:regulation of transcription by RNA polymerase II"/>
    <property type="evidence" value="ECO:0000318"/>
    <property type="project" value="GO_Central"/>
</dbReference>
<dbReference type="CDD" id="cd14689">
    <property type="entry name" value="bZIP_CREB3"/>
    <property type="match status" value="1"/>
</dbReference>
<dbReference type="FunFam" id="1.20.5.170:FF:000042">
    <property type="entry name" value="Cyclic AMP-responsive element-binding protein 3-like protein 3"/>
    <property type="match status" value="1"/>
</dbReference>
<dbReference type="Gene3D" id="1.20.5.170">
    <property type="match status" value="1"/>
</dbReference>
<dbReference type="InterPro" id="IPR004827">
    <property type="entry name" value="bZIP"/>
</dbReference>
<dbReference type="InterPro" id="IPR046347">
    <property type="entry name" value="bZIP_sf"/>
</dbReference>
<dbReference type="InterPro" id="IPR051381">
    <property type="entry name" value="CREB_ATF_subfamily"/>
</dbReference>
<dbReference type="PANTHER" id="PTHR45996">
    <property type="entry name" value="AGAP001464-PB"/>
    <property type="match status" value="1"/>
</dbReference>
<dbReference type="PANTHER" id="PTHR45996:SF1">
    <property type="entry name" value="CYCLIC AMP-RESPONSIVE ELEMENT-BINDING PROTEIN 3-LIKE PROTEIN 3"/>
    <property type="match status" value="1"/>
</dbReference>
<dbReference type="Pfam" id="PF00170">
    <property type="entry name" value="bZIP_1"/>
    <property type="match status" value="1"/>
</dbReference>
<dbReference type="SMART" id="SM00338">
    <property type="entry name" value="BRLZ"/>
    <property type="match status" value="1"/>
</dbReference>
<dbReference type="SUPFAM" id="SSF57959">
    <property type="entry name" value="Leucine zipper domain"/>
    <property type="match status" value="1"/>
</dbReference>
<dbReference type="PROSITE" id="PS50217">
    <property type="entry name" value="BZIP"/>
    <property type="match status" value="1"/>
</dbReference>
<dbReference type="PROSITE" id="PS00036">
    <property type="entry name" value="BZIP_BASIC"/>
    <property type="match status" value="1"/>
</dbReference>
<evidence type="ECO:0000250" key="1"/>
<evidence type="ECO:0000250" key="2">
    <source>
        <dbReference type="UniProtKB" id="Q68CJ9"/>
    </source>
</evidence>
<evidence type="ECO:0000250" key="3">
    <source>
        <dbReference type="UniProtKB" id="Q91XE9"/>
    </source>
</evidence>
<evidence type="ECO:0000255" key="4"/>
<evidence type="ECO:0000255" key="5">
    <source>
        <dbReference type="PROSITE-ProRule" id="PRU00978"/>
    </source>
</evidence>
<evidence type="ECO:0000256" key="6">
    <source>
        <dbReference type="SAM" id="MobiDB-lite"/>
    </source>
</evidence>
<evidence type="ECO:0000305" key="7"/>
<comment type="function">
    <text evidence="1 3">Transcriptional activator. Binds the cAMP response element (CRE). Activates transcription through box-B element and CRE. Seems to function synergistically with atf6 (By similarity). Regulates FGF21 transcription (By similarity).</text>
</comment>
<comment type="subunit">
    <text evidence="2">Binds DNA as a dimer.</text>
</comment>
<comment type="subcellular location">
    <subcellularLocation>
        <location evidence="2">Endoplasmic reticulum membrane</location>
        <topology evidence="2">Single-pass type II membrane protein</topology>
    </subcellularLocation>
</comment>
<comment type="subcellular location">
    <molecule>Processed cyclic AMP-responsive element-binding protein 3-like protein 3-B</molecule>
    <subcellularLocation>
        <location evidence="2">Nucleus</location>
    </subcellularLocation>
</comment>
<comment type="PTM">
    <text evidence="1">Controlled by regulated intramembrane proteolysis (RIP). A fragment containing the cytoplasmic transcription factor domain is released by proteolysis. The cleavage seems to be performed sequentially by site-1 and site-2 proteases (By similarity).</text>
</comment>
<comment type="similarity">
    <text evidence="7">Belongs to the bZIP family. ATF subfamily.</text>
</comment>
<comment type="sequence caution" evidence="7">
    <conflict type="erroneous initiation">
        <sequence resource="EMBL-CDS" id="CAK05095"/>
    </conflict>
</comment>
<proteinExistence type="inferred from homology"/>
<reference key="1">
    <citation type="journal article" date="2013" name="Nature">
        <title>The zebrafish reference genome sequence and its relationship to the human genome.</title>
        <authorList>
            <person name="Howe K."/>
            <person name="Clark M.D."/>
            <person name="Torroja C.F."/>
            <person name="Torrance J."/>
            <person name="Berthelot C."/>
            <person name="Muffato M."/>
            <person name="Collins J.E."/>
            <person name="Humphray S."/>
            <person name="McLaren K."/>
            <person name="Matthews L."/>
            <person name="McLaren S."/>
            <person name="Sealy I."/>
            <person name="Caccamo M."/>
            <person name="Churcher C."/>
            <person name="Scott C."/>
            <person name="Barrett J.C."/>
            <person name="Koch R."/>
            <person name="Rauch G.J."/>
            <person name="White S."/>
            <person name="Chow W."/>
            <person name="Kilian B."/>
            <person name="Quintais L.T."/>
            <person name="Guerra-Assuncao J.A."/>
            <person name="Zhou Y."/>
            <person name="Gu Y."/>
            <person name="Yen J."/>
            <person name="Vogel J.H."/>
            <person name="Eyre T."/>
            <person name="Redmond S."/>
            <person name="Banerjee R."/>
            <person name="Chi J."/>
            <person name="Fu B."/>
            <person name="Langley E."/>
            <person name="Maguire S.F."/>
            <person name="Laird G.K."/>
            <person name="Lloyd D."/>
            <person name="Kenyon E."/>
            <person name="Donaldson S."/>
            <person name="Sehra H."/>
            <person name="Almeida-King J."/>
            <person name="Loveland J."/>
            <person name="Trevanion S."/>
            <person name="Jones M."/>
            <person name="Quail M."/>
            <person name="Willey D."/>
            <person name="Hunt A."/>
            <person name="Burton J."/>
            <person name="Sims S."/>
            <person name="McLay K."/>
            <person name="Plumb B."/>
            <person name="Davis J."/>
            <person name="Clee C."/>
            <person name="Oliver K."/>
            <person name="Clark R."/>
            <person name="Riddle C."/>
            <person name="Elliot D."/>
            <person name="Threadgold G."/>
            <person name="Harden G."/>
            <person name="Ware D."/>
            <person name="Begum S."/>
            <person name="Mortimore B."/>
            <person name="Kerry G."/>
            <person name="Heath P."/>
            <person name="Phillimore B."/>
            <person name="Tracey A."/>
            <person name="Corby N."/>
            <person name="Dunn M."/>
            <person name="Johnson C."/>
            <person name="Wood J."/>
            <person name="Clark S."/>
            <person name="Pelan S."/>
            <person name="Griffiths G."/>
            <person name="Smith M."/>
            <person name="Glithero R."/>
            <person name="Howden P."/>
            <person name="Barker N."/>
            <person name="Lloyd C."/>
            <person name="Stevens C."/>
            <person name="Harley J."/>
            <person name="Holt K."/>
            <person name="Panagiotidis G."/>
            <person name="Lovell J."/>
            <person name="Beasley H."/>
            <person name="Henderson C."/>
            <person name="Gordon D."/>
            <person name="Auger K."/>
            <person name="Wright D."/>
            <person name="Collins J."/>
            <person name="Raisen C."/>
            <person name="Dyer L."/>
            <person name="Leung K."/>
            <person name="Robertson L."/>
            <person name="Ambridge K."/>
            <person name="Leongamornlert D."/>
            <person name="McGuire S."/>
            <person name="Gilderthorp R."/>
            <person name="Griffiths C."/>
            <person name="Manthravadi D."/>
            <person name="Nichol S."/>
            <person name="Barker G."/>
            <person name="Whitehead S."/>
            <person name="Kay M."/>
            <person name="Brown J."/>
            <person name="Murnane C."/>
            <person name="Gray E."/>
            <person name="Humphries M."/>
            <person name="Sycamore N."/>
            <person name="Barker D."/>
            <person name="Saunders D."/>
            <person name="Wallis J."/>
            <person name="Babbage A."/>
            <person name="Hammond S."/>
            <person name="Mashreghi-Mohammadi M."/>
            <person name="Barr L."/>
            <person name="Martin S."/>
            <person name="Wray P."/>
            <person name="Ellington A."/>
            <person name="Matthews N."/>
            <person name="Ellwood M."/>
            <person name="Woodmansey R."/>
            <person name="Clark G."/>
            <person name="Cooper J."/>
            <person name="Tromans A."/>
            <person name="Grafham D."/>
            <person name="Skuce C."/>
            <person name="Pandian R."/>
            <person name="Andrews R."/>
            <person name="Harrison E."/>
            <person name="Kimberley A."/>
            <person name="Garnett J."/>
            <person name="Fosker N."/>
            <person name="Hall R."/>
            <person name="Garner P."/>
            <person name="Kelly D."/>
            <person name="Bird C."/>
            <person name="Palmer S."/>
            <person name="Gehring I."/>
            <person name="Berger A."/>
            <person name="Dooley C.M."/>
            <person name="Ersan-Urun Z."/>
            <person name="Eser C."/>
            <person name="Geiger H."/>
            <person name="Geisler M."/>
            <person name="Karotki L."/>
            <person name="Kirn A."/>
            <person name="Konantz J."/>
            <person name="Konantz M."/>
            <person name="Oberlander M."/>
            <person name="Rudolph-Geiger S."/>
            <person name="Teucke M."/>
            <person name="Lanz C."/>
            <person name="Raddatz G."/>
            <person name="Osoegawa K."/>
            <person name="Zhu B."/>
            <person name="Rapp A."/>
            <person name="Widaa S."/>
            <person name="Langford C."/>
            <person name="Yang F."/>
            <person name="Schuster S.C."/>
            <person name="Carter N.P."/>
            <person name="Harrow J."/>
            <person name="Ning Z."/>
            <person name="Herrero J."/>
            <person name="Searle S.M."/>
            <person name="Enright A."/>
            <person name="Geisler R."/>
            <person name="Plasterk R.H."/>
            <person name="Lee C."/>
            <person name="Westerfield M."/>
            <person name="de Jong P.J."/>
            <person name="Zon L.I."/>
            <person name="Postlethwait J.H."/>
            <person name="Nusslein-Volhard C."/>
            <person name="Hubbard T.J."/>
            <person name="Roest Crollius H."/>
            <person name="Rogers J."/>
            <person name="Stemple D.L."/>
        </authorList>
    </citation>
    <scope>NUCLEOTIDE SEQUENCE [LARGE SCALE GENOMIC DNA]</scope>
    <source>
        <strain>Tuebingen</strain>
    </source>
</reference>
<feature type="chain" id="PRO_0000288078" description="Cyclic AMP-responsive element-binding protein 3-like protein 3-B">
    <location>
        <begin position="1"/>
        <end position="428"/>
    </location>
</feature>
<feature type="chain" id="PRO_0000302807" description="Processed cyclic AMP-responsive element-binding protein 3-like protein 3-B">
    <location>
        <begin position="1"/>
        <end status="unknown"/>
    </location>
</feature>
<feature type="topological domain" description="Cytoplasmic" evidence="4">
    <location>
        <begin position="1"/>
        <end position="286"/>
    </location>
</feature>
<feature type="transmembrane region" description="Helical; Signal-anchor for type II membrane protein" evidence="4">
    <location>
        <begin position="287"/>
        <end position="303"/>
    </location>
</feature>
<feature type="topological domain" description="Lumenal" evidence="4">
    <location>
        <begin position="304"/>
        <end position="428"/>
    </location>
</feature>
<feature type="domain" description="bZIP" evidence="5">
    <location>
        <begin position="210"/>
        <end position="273"/>
    </location>
</feature>
<feature type="region of interest" description="Disordered" evidence="6">
    <location>
        <begin position="67"/>
        <end position="104"/>
    </location>
</feature>
<feature type="region of interest" description="Basic motif" evidence="5">
    <location>
        <begin position="212"/>
        <end position="241"/>
    </location>
</feature>
<feature type="region of interest" description="Leucine-zipper" evidence="5">
    <location>
        <begin position="252"/>
        <end position="273"/>
    </location>
</feature>
<feature type="region of interest" description="Disordered" evidence="6">
    <location>
        <begin position="381"/>
        <end position="428"/>
    </location>
</feature>
<feature type="compositionally biased region" description="Low complexity" evidence="6">
    <location>
        <begin position="67"/>
        <end position="83"/>
    </location>
</feature>
<feature type="compositionally biased region" description="Pro residues" evidence="6">
    <location>
        <begin position="93"/>
        <end position="103"/>
    </location>
</feature>
<feature type="compositionally biased region" description="Basic and acidic residues" evidence="6">
    <location>
        <begin position="385"/>
        <end position="402"/>
    </location>
</feature>
<feature type="site" description="Cleavage; by PS1" evidence="1">
    <location>
        <begin position="330"/>
        <end position="331"/>
    </location>
</feature>
<feature type="glycosylation site" description="N-linked (GlcNAc...) asparagine" evidence="4">
    <location>
        <position position="389"/>
    </location>
</feature>
<protein>
    <recommendedName>
        <fullName>Cyclic AMP-responsive element-binding protein 3-like protein 3-B</fullName>
        <shortName>cAMP-responsive element-binding protein 3-like protein 3-B</shortName>
    </recommendedName>
    <component>
        <recommendedName>
            <fullName>Processed cyclic AMP-responsive element-binding protein 3-like protein 3-B</fullName>
        </recommendedName>
    </component>
</protein>
<keyword id="KW-0010">Activator</keyword>
<keyword id="KW-0238">DNA-binding</keyword>
<keyword id="KW-0256">Endoplasmic reticulum</keyword>
<keyword id="KW-0325">Glycoprotein</keyword>
<keyword id="KW-0472">Membrane</keyword>
<keyword id="KW-0539">Nucleus</keyword>
<keyword id="KW-1185">Reference proteome</keyword>
<keyword id="KW-0735">Signal-anchor</keyword>
<keyword id="KW-0804">Transcription</keyword>
<keyword id="KW-0805">Transcription regulation</keyword>
<keyword id="KW-0812">Transmembrane</keyword>
<keyword id="KW-1133">Transmembrane helix</keyword>